<dbReference type="EC" id="6.3.4.16" evidence="1"/>
<dbReference type="EC" id="6.3.5.5" evidence="1"/>
<dbReference type="EMBL" id="CP000477">
    <property type="protein sequence ID" value="ABK15033.1"/>
    <property type="molecule type" value="Genomic_DNA"/>
</dbReference>
<dbReference type="RefSeq" id="WP_011696425.1">
    <property type="nucleotide sequence ID" value="NC_008553.1"/>
</dbReference>
<dbReference type="SMR" id="A0B8K9"/>
<dbReference type="STRING" id="349307.Mthe_1254"/>
<dbReference type="GeneID" id="4462540"/>
<dbReference type="KEGG" id="mtp:Mthe_1254"/>
<dbReference type="HOGENOM" id="CLU_000513_1_0_2"/>
<dbReference type="OrthoDB" id="85487at2157"/>
<dbReference type="UniPathway" id="UPA00068">
    <property type="reaction ID" value="UER00171"/>
</dbReference>
<dbReference type="UniPathway" id="UPA00070">
    <property type="reaction ID" value="UER00115"/>
</dbReference>
<dbReference type="Proteomes" id="UP000000674">
    <property type="component" value="Chromosome"/>
</dbReference>
<dbReference type="GO" id="GO:0005737">
    <property type="term" value="C:cytoplasm"/>
    <property type="evidence" value="ECO:0007669"/>
    <property type="project" value="TreeGrafter"/>
</dbReference>
<dbReference type="GO" id="GO:0005524">
    <property type="term" value="F:ATP binding"/>
    <property type="evidence" value="ECO:0007669"/>
    <property type="project" value="UniProtKB-UniRule"/>
</dbReference>
<dbReference type="GO" id="GO:0004087">
    <property type="term" value="F:carbamoyl-phosphate synthase (ammonia) activity"/>
    <property type="evidence" value="ECO:0007669"/>
    <property type="project" value="RHEA"/>
</dbReference>
<dbReference type="GO" id="GO:0004088">
    <property type="term" value="F:carbamoyl-phosphate synthase (glutamine-hydrolyzing) activity"/>
    <property type="evidence" value="ECO:0007669"/>
    <property type="project" value="UniProtKB-UniRule"/>
</dbReference>
<dbReference type="GO" id="GO:0046872">
    <property type="term" value="F:metal ion binding"/>
    <property type="evidence" value="ECO:0007669"/>
    <property type="project" value="UniProtKB-KW"/>
</dbReference>
<dbReference type="GO" id="GO:0044205">
    <property type="term" value="P:'de novo' UMP biosynthetic process"/>
    <property type="evidence" value="ECO:0007669"/>
    <property type="project" value="UniProtKB-UniRule"/>
</dbReference>
<dbReference type="GO" id="GO:0006541">
    <property type="term" value="P:glutamine metabolic process"/>
    <property type="evidence" value="ECO:0007669"/>
    <property type="project" value="TreeGrafter"/>
</dbReference>
<dbReference type="GO" id="GO:0006526">
    <property type="term" value="P:L-arginine biosynthetic process"/>
    <property type="evidence" value="ECO:0007669"/>
    <property type="project" value="UniProtKB-UniRule"/>
</dbReference>
<dbReference type="CDD" id="cd01424">
    <property type="entry name" value="MGS_CPS_II"/>
    <property type="match status" value="1"/>
</dbReference>
<dbReference type="FunFam" id="1.10.1030.10:FF:000002">
    <property type="entry name" value="Carbamoyl-phosphate synthase large chain"/>
    <property type="match status" value="1"/>
</dbReference>
<dbReference type="FunFam" id="3.30.1490.20:FF:000001">
    <property type="entry name" value="Carbamoyl-phosphate synthase large chain"/>
    <property type="match status" value="1"/>
</dbReference>
<dbReference type="FunFam" id="3.30.470.20:FF:000001">
    <property type="entry name" value="Carbamoyl-phosphate synthase large chain"/>
    <property type="match status" value="1"/>
</dbReference>
<dbReference type="FunFam" id="3.30.470.20:FF:000013">
    <property type="entry name" value="Carbamoyl-phosphate synthase large chain"/>
    <property type="match status" value="1"/>
</dbReference>
<dbReference type="FunFam" id="3.40.50.20:FF:000001">
    <property type="entry name" value="Carbamoyl-phosphate synthase large chain"/>
    <property type="match status" value="1"/>
</dbReference>
<dbReference type="FunFam" id="3.40.50.20:FF:000002">
    <property type="entry name" value="Carbamoyl-phosphate synthase large chain"/>
    <property type="match status" value="1"/>
</dbReference>
<dbReference type="Gene3D" id="3.40.50.20">
    <property type="match status" value="2"/>
</dbReference>
<dbReference type="Gene3D" id="3.30.1490.20">
    <property type="entry name" value="ATP-grasp fold, A domain"/>
    <property type="match status" value="1"/>
</dbReference>
<dbReference type="Gene3D" id="3.30.470.20">
    <property type="entry name" value="ATP-grasp fold, B domain"/>
    <property type="match status" value="2"/>
</dbReference>
<dbReference type="Gene3D" id="1.10.1030.10">
    <property type="entry name" value="Carbamoyl-phosphate synthetase, large subunit oligomerisation domain"/>
    <property type="match status" value="1"/>
</dbReference>
<dbReference type="Gene3D" id="3.40.50.1380">
    <property type="entry name" value="Methylglyoxal synthase-like domain"/>
    <property type="match status" value="1"/>
</dbReference>
<dbReference type="HAMAP" id="MF_01210_A">
    <property type="entry name" value="CPSase_L_chain_A"/>
    <property type="match status" value="1"/>
</dbReference>
<dbReference type="HAMAP" id="MF_01210_B">
    <property type="entry name" value="CPSase_L_chain_B"/>
    <property type="match status" value="1"/>
</dbReference>
<dbReference type="InterPro" id="IPR011761">
    <property type="entry name" value="ATP-grasp"/>
</dbReference>
<dbReference type="InterPro" id="IPR013815">
    <property type="entry name" value="ATP_grasp_subdomain_1"/>
</dbReference>
<dbReference type="InterPro" id="IPR006275">
    <property type="entry name" value="CarbamoylP_synth_lsu"/>
</dbReference>
<dbReference type="InterPro" id="IPR005480">
    <property type="entry name" value="CarbamoylP_synth_lsu_oligo"/>
</dbReference>
<dbReference type="InterPro" id="IPR036897">
    <property type="entry name" value="CarbamoylP_synth_lsu_oligo_sf"/>
</dbReference>
<dbReference type="InterPro" id="IPR005479">
    <property type="entry name" value="CbamoylP_synth_lsu-like_ATP-bd"/>
</dbReference>
<dbReference type="InterPro" id="IPR005483">
    <property type="entry name" value="CbamoylP_synth_lsu_CPSase_dom"/>
</dbReference>
<dbReference type="InterPro" id="IPR011607">
    <property type="entry name" value="MGS-like_dom"/>
</dbReference>
<dbReference type="InterPro" id="IPR036914">
    <property type="entry name" value="MGS-like_dom_sf"/>
</dbReference>
<dbReference type="InterPro" id="IPR033937">
    <property type="entry name" value="MGS_CPS_CarB"/>
</dbReference>
<dbReference type="InterPro" id="IPR016185">
    <property type="entry name" value="PreATP-grasp_dom_sf"/>
</dbReference>
<dbReference type="NCBIfam" id="TIGR01369">
    <property type="entry name" value="CPSaseII_lrg"/>
    <property type="match status" value="1"/>
</dbReference>
<dbReference type="NCBIfam" id="NF003671">
    <property type="entry name" value="PRK05294.1"/>
    <property type="match status" value="1"/>
</dbReference>
<dbReference type="NCBIfam" id="NF009455">
    <property type="entry name" value="PRK12815.1"/>
    <property type="match status" value="1"/>
</dbReference>
<dbReference type="PANTHER" id="PTHR11405:SF53">
    <property type="entry name" value="CARBAMOYL-PHOSPHATE SYNTHASE [AMMONIA], MITOCHONDRIAL"/>
    <property type="match status" value="1"/>
</dbReference>
<dbReference type="PANTHER" id="PTHR11405">
    <property type="entry name" value="CARBAMOYLTRANSFERASE FAMILY MEMBER"/>
    <property type="match status" value="1"/>
</dbReference>
<dbReference type="Pfam" id="PF02786">
    <property type="entry name" value="CPSase_L_D2"/>
    <property type="match status" value="2"/>
</dbReference>
<dbReference type="Pfam" id="PF02787">
    <property type="entry name" value="CPSase_L_D3"/>
    <property type="match status" value="1"/>
</dbReference>
<dbReference type="Pfam" id="PF02142">
    <property type="entry name" value="MGS"/>
    <property type="match status" value="1"/>
</dbReference>
<dbReference type="PRINTS" id="PR00098">
    <property type="entry name" value="CPSASE"/>
</dbReference>
<dbReference type="SMART" id="SM01096">
    <property type="entry name" value="CPSase_L_D3"/>
    <property type="match status" value="1"/>
</dbReference>
<dbReference type="SMART" id="SM00851">
    <property type="entry name" value="MGS"/>
    <property type="match status" value="1"/>
</dbReference>
<dbReference type="SUPFAM" id="SSF48108">
    <property type="entry name" value="Carbamoyl phosphate synthetase, large subunit connection domain"/>
    <property type="match status" value="1"/>
</dbReference>
<dbReference type="SUPFAM" id="SSF56059">
    <property type="entry name" value="Glutathione synthetase ATP-binding domain-like"/>
    <property type="match status" value="2"/>
</dbReference>
<dbReference type="SUPFAM" id="SSF52335">
    <property type="entry name" value="Methylglyoxal synthase-like"/>
    <property type="match status" value="1"/>
</dbReference>
<dbReference type="SUPFAM" id="SSF52440">
    <property type="entry name" value="PreATP-grasp domain"/>
    <property type="match status" value="2"/>
</dbReference>
<dbReference type="PROSITE" id="PS50975">
    <property type="entry name" value="ATP_GRASP"/>
    <property type="match status" value="2"/>
</dbReference>
<dbReference type="PROSITE" id="PS00866">
    <property type="entry name" value="CPSASE_1"/>
    <property type="match status" value="1"/>
</dbReference>
<dbReference type="PROSITE" id="PS00867">
    <property type="entry name" value="CPSASE_2"/>
    <property type="match status" value="2"/>
</dbReference>
<dbReference type="PROSITE" id="PS51855">
    <property type="entry name" value="MGS"/>
    <property type="match status" value="1"/>
</dbReference>
<evidence type="ECO:0000255" key="1">
    <source>
        <dbReference type="HAMAP-Rule" id="MF_01210"/>
    </source>
</evidence>
<protein>
    <recommendedName>
        <fullName evidence="1">Carbamoyl phosphate synthase large chain</fullName>
        <ecNumber evidence="1">6.3.4.16</ecNumber>
        <ecNumber evidence="1">6.3.5.5</ecNumber>
    </recommendedName>
    <alternativeName>
        <fullName evidence="1">Carbamoyl phosphate synthetase ammonia chain</fullName>
    </alternativeName>
</protein>
<name>CARB_METTP</name>
<reference key="1">
    <citation type="submission" date="2006-10" db="EMBL/GenBank/DDBJ databases">
        <title>Complete sequence of Methanosaeta thermophila PT.</title>
        <authorList>
            <consortium name="US DOE Joint Genome Institute"/>
            <person name="Copeland A."/>
            <person name="Lucas S."/>
            <person name="Lapidus A."/>
            <person name="Barry K."/>
            <person name="Detter J.C."/>
            <person name="Glavina del Rio T."/>
            <person name="Hammon N."/>
            <person name="Israni S."/>
            <person name="Pitluck S."/>
            <person name="Chain P."/>
            <person name="Malfatti S."/>
            <person name="Shin M."/>
            <person name="Vergez L."/>
            <person name="Schmutz J."/>
            <person name="Larimer F."/>
            <person name="Land M."/>
            <person name="Hauser L."/>
            <person name="Kyrpides N."/>
            <person name="Kim E."/>
            <person name="Smith K.S."/>
            <person name="Ingram-Smith C."/>
            <person name="Richardson P."/>
        </authorList>
    </citation>
    <scope>NUCLEOTIDE SEQUENCE [LARGE SCALE GENOMIC DNA]</scope>
    <source>
        <strain>DSM 6194 / JCM 14653 / NBRC 101360 / PT</strain>
    </source>
</reference>
<sequence>MPKRSDIKKVLLIGSGPIQIGQAAEFDFSGSQACKSLREEGVEVVLVNSNPATIMTDPDMADKVYIEPLVPEIVAKIIEKERPDGIIAGIGGQTGLNITSELAEMGVLEKYGVEVLGTKVRSIQEAEDRDLFKKAMERIGEPVPRSIAVTSLEEAEEAMKELGLPLIVRPAYTLGGSGGGVARTHEELMRICEMGLKRSRIHQVLLEESVIGWTEVEYEVMRDSNNTCITICNMENMDPMGIHTGESIVVTPIQTLSDHEIQMLRSAAINIIRALGIEGGCNIQFAVRNGEYRVIEVNPRVSRSSALASKATGYPIARVTAKIAIGLTLDEIRNDVTKETPASFEPTVDYVVIKIPRWPFDKFVKADRTLTTSMKSTGEVMAIGRSYEEALMKAIRSLDIDIDLGYNGKYVPWTDDDVRELLRTPTDERLFAIYQALRRGFSVEEISQLSMIDPYFIERIQNIIRMEDELKNGLTPDRLRRAKKMGFLDSRIAELVGLSREEVTDYRLSLGIIPTYKMVDTCAAEFAASTPYYYSTYDEECELNPSDNKKVLILGSGPIRIGQGIEFDYCTVHAVTALREMGIEAHIINNNPETVSTDYDTSDKLFFEPVTLEDVMNVIEKERYWGVMVQFGGQTAVNLAVPLEKELKRRGLKTVILGTSPDSIDIAEDRERFNKLLNKLGIPQPKAGIAYSPEEAKRVAKEIGYPVLVRPSYVLGGRAMEIVYDESGLELYMREAVRVSHEHPVLIDDFLQNAVEIDVDAVSDGRDVLIGAIMEHIEEAGIHSGDSACMIPPQTLPEDVIATVKDYVRRIALALDVKGIINIQMAYKDGIVYVLEANPRSSRTIPFVSKAVGLPLAKIAAKVMAGNTLREMNLNVEPEIPYVAVKEVLLPFDKLPGADVLLGPEMRSTGEVMGIDYNMGLSFFKAEMSAENNLPLDGIVFISVRDEDKAEIAEVARRFVNAGLKIIATDGTSGYLRGSGVPAERVRKIYHGSPNVLDYIRRGEVKLIINTPTTKQSVKDGFQIRRSAVDYHVPYITTVQAAKAAAEAIEKALRGELTIKALDEYHREVRYRAL</sequence>
<accession>A0B8K9</accession>
<organism>
    <name type="scientific">Methanothrix thermoacetophila (strain DSM 6194 / JCM 14653 / NBRC 101360 / PT)</name>
    <name type="common">Methanosaeta thermophila</name>
    <dbReference type="NCBI Taxonomy" id="349307"/>
    <lineage>
        <taxon>Archaea</taxon>
        <taxon>Methanobacteriati</taxon>
        <taxon>Methanobacteriota</taxon>
        <taxon>Stenosarchaea group</taxon>
        <taxon>Methanomicrobia</taxon>
        <taxon>Methanotrichales</taxon>
        <taxon>Methanotrichaceae</taxon>
        <taxon>Methanothrix</taxon>
    </lineage>
</organism>
<keyword id="KW-0028">Amino-acid biosynthesis</keyword>
<keyword id="KW-0055">Arginine biosynthesis</keyword>
<keyword id="KW-0067">ATP-binding</keyword>
<keyword id="KW-0436">Ligase</keyword>
<keyword id="KW-0460">Magnesium</keyword>
<keyword id="KW-0464">Manganese</keyword>
<keyword id="KW-0479">Metal-binding</keyword>
<keyword id="KW-0547">Nucleotide-binding</keyword>
<keyword id="KW-0665">Pyrimidine biosynthesis</keyword>
<keyword id="KW-1185">Reference proteome</keyword>
<keyword id="KW-0677">Repeat</keyword>
<proteinExistence type="inferred from homology"/>
<comment type="function">
    <text evidence="1">Large subunit of the glutamine-dependent carbamoyl phosphate synthetase (CPSase). CPSase catalyzes the formation of carbamoyl phosphate from the ammonia moiety of glutamine, carbonate, and phosphate donated by ATP, constituting the first step of 2 biosynthetic pathways, one leading to arginine and/or urea and the other to pyrimidine nucleotides. The large subunit (synthetase) binds the substrates ammonia (free or transferred from glutamine from the small subunit), hydrogencarbonate and ATP and carries out an ATP-coupled ligase reaction, activating hydrogencarbonate by forming carboxy phosphate which reacts with ammonia to form carbamoyl phosphate.</text>
</comment>
<comment type="catalytic activity">
    <reaction evidence="1">
        <text>hydrogencarbonate + L-glutamine + 2 ATP + H2O = carbamoyl phosphate + L-glutamate + 2 ADP + phosphate + 2 H(+)</text>
        <dbReference type="Rhea" id="RHEA:18633"/>
        <dbReference type="ChEBI" id="CHEBI:15377"/>
        <dbReference type="ChEBI" id="CHEBI:15378"/>
        <dbReference type="ChEBI" id="CHEBI:17544"/>
        <dbReference type="ChEBI" id="CHEBI:29985"/>
        <dbReference type="ChEBI" id="CHEBI:30616"/>
        <dbReference type="ChEBI" id="CHEBI:43474"/>
        <dbReference type="ChEBI" id="CHEBI:58228"/>
        <dbReference type="ChEBI" id="CHEBI:58359"/>
        <dbReference type="ChEBI" id="CHEBI:456216"/>
        <dbReference type="EC" id="6.3.5.5"/>
    </reaction>
</comment>
<comment type="catalytic activity">
    <molecule>Carbamoyl phosphate synthase large chain</molecule>
    <reaction evidence="1">
        <text>hydrogencarbonate + NH4(+) + 2 ATP = carbamoyl phosphate + 2 ADP + phosphate + 2 H(+)</text>
        <dbReference type="Rhea" id="RHEA:18029"/>
        <dbReference type="ChEBI" id="CHEBI:15378"/>
        <dbReference type="ChEBI" id="CHEBI:17544"/>
        <dbReference type="ChEBI" id="CHEBI:28938"/>
        <dbReference type="ChEBI" id="CHEBI:30616"/>
        <dbReference type="ChEBI" id="CHEBI:43474"/>
        <dbReference type="ChEBI" id="CHEBI:58228"/>
        <dbReference type="ChEBI" id="CHEBI:456216"/>
        <dbReference type="EC" id="6.3.4.16"/>
    </reaction>
</comment>
<comment type="cofactor">
    <cofactor evidence="1">
        <name>Mg(2+)</name>
        <dbReference type="ChEBI" id="CHEBI:18420"/>
    </cofactor>
    <cofactor evidence="1">
        <name>Mn(2+)</name>
        <dbReference type="ChEBI" id="CHEBI:29035"/>
    </cofactor>
    <text evidence="1">Binds 4 Mg(2+) or Mn(2+) ions per subunit.</text>
</comment>
<comment type="pathway">
    <text evidence="1">Amino-acid biosynthesis; L-arginine biosynthesis; carbamoyl phosphate from bicarbonate: step 1/1.</text>
</comment>
<comment type="pathway">
    <text evidence="1">Pyrimidine metabolism; UMP biosynthesis via de novo pathway; (S)-dihydroorotate from bicarbonate: step 1/3.</text>
</comment>
<comment type="subunit">
    <text evidence="1">Composed of two chains; the small (or glutamine) chain promotes the hydrolysis of glutamine to ammonia, which is used by the large (or ammonia) chain to synthesize carbamoyl phosphate. Tetramer of heterodimers (alpha,beta)4.</text>
</comment>
<comment type="domain">
    <text evidence="1">The large subunit is composed of 2 ATP-grasp domains that are involved in binding the 2 ATP molecules needed for carbamoyl phosphate synthesis. The N-terminal ATP-grasp domain (referred to as the carboxyphosphate synthetic component) catalyzes the ATP-dependent phosphorylation of hydrogencarbonate to carboxyphosphate and the subsequent nucleophilic attack by ammonia to form a carbamate intermediate. The C-terminal ATP-grasp domain (referred to as the carbamoyl phosphate synthetic component) then catalyzes the phosphorylation of carbamate with the second ATP to form the end product carbamoyl phosphate. The reactive and unstable enzyme intermediates are sequentially channeled from one active site to the next through the interior of the protein over a distance of at least 96 A.</text>
</comment>
<comment type="similarity">
    <text evidence="1">Belongs to the CarB family.</text>
</comment>
<gene>
    <name evidence="1" type="primary">carB</name>
    <name type="ordered locus">Mthe_1254</name>
</gene>
<feature type="chain" id="PRO_1000066368" description="Carbamoyl phosphate synthase large chain">
    <location>
        <begin position="1"/>
        <end position="1074"/>
    </location>
</feature>
<feature type="domain" description="ATP-grasp 1" evidence="1">
    <location>
        <begin position="133"/>
        <end position="325"/>
    </location>
</feature>
<feature type="domain" description="ATP-grasp 2" evidence="1">
    <location>
        <begin position="674"/>
        <end position="865"/>
    </location>
</feature>
<feature type="domain" description="MGS-like" evidence="1">
    <location>
        <begin position="932"/>
        <end position="1074"/>
    </location>
</feature>
<feature type="region of interest" description="Carboxyphosphate synthetic domain" evidence="1">
    <location>
        <begin position="1"/>
        <end position="399"/>
    </location>
</feature>
<feature type="region of interest" description="Oligomerization domain" evidence="1">
    <location>
        <begin position="400"/>
        <end position="543"/>
    </location>
</feature>
<feature type="region of interest" description="Carbamoyl phosphate synthetic domain" evidence="1">
    <location>
        <begin position="544"/>
        <end position="933"/>
    </location>
</feature>
<feature type="region of interest" description="Allosteric domain" evidence="1">
    <location>
        <begin position="934"/>
        <end position="1074"/>
    </location>
</feature>
<feature type="binding site" evidence="1">
    <location>
        <position position="129"/>
    </location>
    <ligand>
        <name>ATP</name>
        <dbReference type="ChEBI" id="CHEBI:30616"/>
        <label>1</label>
    </ligand>
</feature>
<feature type="binding site" evidence="1">
    <location>
        <position position="169"/>
    </location>
    <ligand>
        <name>ATP</name>
        <dbReference type="ChEBI" id="CHEBI:30616"/>
        <label>1</label>
    </ligand>
</feature>
<feature type="binding site" evidence="1">
    <location>
        <position position="175"/>
    </location>
    <ligand>
        <name>ATP</name>
        <dbReference type="ChEBI" id="CHEBI:30616"/>
        <label>1</label>
    </ligand>
</feature>
<feature type="binding site" evidence="1">
    <location>
        <position position="176"/>
    </location>
    <ligand>
        <name>ATP</name>
        <dbReference type="ChEBI" id="CHEBI:30616"/>
        <label>1</label>
    </ligand>
</feature>
<feature type="binding site" evidence="1">
    <location>
        <position position="208"/>
    </location>
    <ligand>
        <name>ATP</name>
        <dbReference type="ChEBI" id="CHEBI:30616"/>
        <label>1</label>
    </ligand>
</feature>
<feature type="binding site" evidence="1">
    <location>
        <position position="210"/>
    </location>
    <ligand>
        <name>ATP</name>
        <dbReference type="ChEBI" id="CHEBI:30616"/>
        <label>1</label>
    </ligand>
</feature>
<feature type="binding site" evidence="1">
    <location>
        <position position="215"/>
    </location>
    <ligand>
        <name>ATP</name>
        <dbReference type="ChEBI" id="CHEBI:30616"/>
        <label>1</label>
    </ligand>
</feature>
<feature type="binding site" evidence="1">
    <location>
        <position position="241"/>
    </location>
    <ligand>
        <name>ATP</name>
        <dbReference type="ChEBI" id="CHEBI:30616"/>
        <label>1</label>
    </ligand>
</feature>
<feature type="binding site" evidence="1">
    <location>
        <position position="242"/>
    </location>
    <ligand>
        <name>ATP</name>
        <dbReference type="ChEBI" id="CHEBI:30616"/>
        <label>1</label>
    </ligand>
</feature>
<feature type="binding site" evidence="1">
    <location>
        <position position="243"/>
    </location>
    <ligand>
        <name>ATP</name>
        <dbReference type="ChEBI" id="CHEBI:30616"/>
        <label>1</label>
    </ligand>
</feature>
<feature type="binding site" evidence="1">
    <location>
        <position position="284"/>
    </location>
    <ligand>
        <name>ATP</name>
        <dbReference type="ChEBI" id="CHEBI:30616"/>
        <label>1</label>
    </ligand>
</feature>
<feature type="binding site" evidence="1">
    <location>
        <position position="284"/>
    </location>
    <ligand>
        <name>Mg(2+)</name>
        <dbReference type="ChEBI" id="CHEBI:18420"/>
        <label>1</label>
    </ligand>
</feature>
<feature type="binding site" evidence="1">
    <location>
        <position position="284"/>
    </location>
    <ligand>
        <name>Mn(2+)</name>
        <dbReference type="ChEBI" id="CHEBI:29035"/>
        <label>1</label>
    </ligand>
</feature>
<feature type="binding site" evidence="1">
    <location>
        <position position="296"/>
    </location>
    <ligand>
        <name>ATP</name>
        <dbReference type="ChEBI" id="CHEBI:30616"/>
        <label>1</label>
    </ligand>
</feature>
<feature type="binding site" evidence="1">
    <location>
        <position position="296"/>
    </location>
    <ligand>
        <name>Mg(2+)</name>
        <dbReference type="ChEBI" id="CHEBI:18420"/>
        <label>1</label>
    </ligand>
</feature>
<feature type="binding site" evidence="1">
    <location>
        <position position="296"/>
    </location>
    <ligand>
        <name>Mg(2+)</name>
        <dbReference type="ChEBI" id="CHEBI:18420"/>
        <label>2</label>
    </ligand>
</feature>
<feature type="binding site" evidence="1">
    <location>
        <position position="296"/>
    </location>
    <ligand>
        <name>Mn(2+)</name>
        <dbReference type="ChEBI" id="CHEBI:29035"/>
        <label>1</label>
    </ligand>
</feature>
<feature type="binding site" evidence="1">
    <location>
        <position position="296"/>
    </location>
    <ligand>
        <name>Mn(2+)</name>
        <dbReference type="ChEBI" id="CHEBI:29035"/>
        <label>2</label>
    </ligand>
</feature>
<feature type="binding site" evidence="1">
    <location>
        <position position="298"/>
    </location>
    <ligand>
        <name>Mg(2+)</name>
        <dbReference type="ChEBI" id="CHEBI:18420"/>
        <label>2</label>
    </ligand>
</feature>
<feature type="binding site" evidence="1">
    <location>
        <position position="298"/>
    </location>
    <ligand>
        <name>Mn(2+)</name>
        <dbReference type="ChEBI" id="CHEBI:29035"/>
        <label>2</label>
    </ligand>
</feature>
<feature type="binding site" evidence="1">
    <location>
        <position position="710"/>
    </location>
    <ligand>
        <name>ATP</name>
        <dbReference type="ChEBI" id="CHEBI:30616"/>
        <label>2</label>
    </ligand>
</feature>
<feature type="binding site" evidence="1">
    <location>
        <position position="749"/>
    </location>
    <ligand>
        <name>ATP</name>
        <dbReference type="ChEBI" id="CHEBI:30616"/>
        <label>2</label>
    </ligand>
</feature>
<feature type="binding site" evidence="1">
    <location>
        <position position="751"/>
    </location>
    <ligand>
        <name>ATP</name>
        <dbReference type="ChEBI" id="CHEBI:30616"/>
        <label>2</label>
    </ligand>
</feature>
<feature type="binding site" evidence="1">
    <location>
        <position position="756"/>
    </location>
    <ligand>
        <name>ATP</name>
        <dbReference type="ChEBI" id="CHEBI:30616"/>
        <label>2</label>
    </ligand>
</feature>
<feature type="binding site" evidence="1">
    <location>
        <position position="781"/>
    </location>
    <ligand>
        <name>ATP</name>
        <dbReference type="ChEBI" id="CHEBI:30616"/>
        <label>2</label>
    </ligand>
</feature>
<feature type="binding site" evidence="1">
    <location>
        <position position="782"/>
    </location>
    <ligand>
        <name>ATP</name>
        <dbReference type="ChEBI" id="CHEBI:30616"/>
        <label>2</label>
    </ligand>
</feature>
<feature type="binding site" evidence="1">
    <location>
        <position position="783"/>
    </location>
    <ligand>
        <name>ATP</name>
        <dbReference type="ChEBI" id="CHEBI:30616"/>
        <label>2</label>
    </ligand>
</feature>
<feature type="binding site" evidence="1">
    <location>
        <position position="784"/>
    </location>
    <ligand>
        <name>ATP</name>
        <dbReference type="ChEBI" id="CHEBI:30616"/>
        <label>2</label>
    </ligand>
</feature>
<feature type="binding site" evidence="1">
    <location>
        <position position="824"/>
    </location>
    <ligand>
        <name>ATP</name>
        <dbReference type="ChEBI" id="CHEBI:30616"/>
        <label>2</label>
    </ligand>
</feature>
<feature type="binding site" evidence="1">
    <location>
        <position position="824"/>
    </location>
    <ligand>
        <name>Mg(2+)</name>
        <dbReference type="ChEBI" id="CHEBI:18420"/>
        <label>3</label>
    </ligand>
</feature>
<feature type="binding site" evidence="1">
    <location>
        <position position="824"/>
    </location>
    <ligand>
        <name>Mn(2+)</name>
        <dbReference type="ChEBI" id="CHEBI:29035"/>
        <label>3</label>
    </ligand>
</feature>
<feature type="binding site" evidence="1">
    <location>
        <position position="836"/>
    </location>
    <ligand>
        <name>ATP</name>
        <dbReference type="ChEBI" id="CHEBI:30616"/>
        <label>2</label>
    </ligand>
</feature>
<feature type="binding site" evidence="1">
    <location>
        <position position="836"/>
    </location>
    <ligand>
        <name>Mg(2+)</name>
        <dbReference type="ChEBI" id="CHEBI:18420"/>
        <label>3</label>
    </ligand>
</feature>
<feature type="binding site" evidence="1">
    <location>
        <position position="836"/>
    </location>
    <ligand>
        <name>Mg(2+)</name>
        <dbReference type="ChEBI" id="CHEBI:18420"/>
        <label>4</label>
    </ligand>
</feature>
<feature type="binding site" evidence="1">
    <location>
        <position position="836"/>
    </location>
    <ligand>
        <name>Mn(2+)</name>
        <dbReference type="ChEBI" id="CHEBI:29035"/>
        <label>3</label>
    </ligand>
</feature>
<feature type="binding site" evidence="1">
    <location>
        <position position="836"/>
    </location>
    <ligand>
        <name>Mn(2+)</name>
        <dbReference type="ChEBI" id="CHEBI:29035"/>
        <label>4</label>
    </ligand>
</feature>
<feature type="binding site" evidence="1">
    <location>
        <position position="838"/>
    </location>
    <ligand>
        <name>Mg(2+)</name>
        <dbReference type="ChEBI" id="CHEBI:18420"/>
        <label>4</label>
    </ligand>
</feature>
<feature type="binding site" evidence="1">
    <location>
        <position position="838"/>
    </location>
    <ligand>
        <name>Mn(2+)</name>
        <dbReference type="ChEBI" id="CHEBI:29035"/>
        <label>4</label>
    </ligand>
</feature>